<gene>
    <name type="ordered locus">RC0016</name>
</gene>
<organism>
    <name type="scientific">Rickettsia conorii (strain ATCC VR-613 / Malish 7)</name>
    <dbReference type="NCBI Taxonomy" id="272944"/>
    <lineage>
        <taxon>Bacteria</taxon>
        <taxon>Pseudomonadati</taxon>
        <taxon>Pseudomonadota</taxon>
        <taxon>Alphaproteobacteria</taxon>
        <taxon>Rickettsiales</taxon>
        <taxon>Rickettsiaceae</taxon>
        <taxon>Rickettsieae</taxon>
        <taxon>Rickettsia</taxon>
        <taxon>spotted fever group</taxon>
    </lineage>
</organism>
<protein>
    <recommendedName>
        <fullName>Uncharacterized protein RC0016</fullName>
    </recommendedName>
</protein>
<accession>Q92JQ1</accession>
<proteinExistence type="predicted"/>
<dbReference type="EMBL" id="AE006914">
    <property type="protein sequence ID" value="AAL02554.1"/>
    <property type="molecule type" value="Genomic_DNA"/>
</dbReference>
<dbReference type="PIR" id="H97701">
    <property type="entry name" value="H97701"/>
</dbReference>
<dbReference type="KEGG" id="rco:RC0016"/>
<dbReference type="HOGENOM" id="CLU_2685471_0_0_5"/>
<dbReference type="Proteomes" id="UP000000816">
    <property type="component" value="Chromosome"/>
</dbReference>
<sequence>MLGLAIMAISFIFMSYSPKPELIFDANHMAVGVKDRENKLVIHADKIPAFNRTYWANWFGQKDSMVLPLENNIF</sequence>
<name>Y016_RICCN</name>
<feature type="chain" id="PRO_0000101432" description="Uncharacterized protein RC0016">
    <location>
        <begin position="1"/>
        <end position="74"/>
    </location>
</feature>
<reference key="1">
    <citation type="journal article" date="2001" name="Science">
        <title>Mechanisms of evolution in Rickettsia conorii and R. prowazekii.</title>
        <authorList>
            <person name="Ogata H."/>
            <person name="Audic S."/>
            <person name="Renesto-Audiffren P."/>
            <person name="Fournier P.-E."/>
            <person name="Barbe V."/>
            <person name="Samson D."/>
            <person name="Roux V."/>
            <person name="Cossart P."/>
            <person name="Weissenbach J."/>
            <person name="Claverie J.-M."/>
            <person name="Raoult D."/>
        </authorList>
    </citation>
    <scope>NUCLEOTIDE SEQUENCE [LARGE SCALE GENOMIC DNA]</scope>
    <source>
        <strain>ATCC VR-613 / Malish 7</strain>
    </source>
</reference>